<gene>
    <name evidence="1" type="primary">gcvH</name>
    <name type="ordered locus">SH2051</name>
</gene>
<name>GCSH_STAHJ</name>
<reference key="1">
    <citation type="journal article" date="2005" name="J. Bacteriol.">
        <title>Whole-genome sequencing of Staphylococcus haemolyticus uncovers the extreme plasticity of its genome and the evolution of human-colonizing staphylococcal species.</title>
        <authorList>
            <person name="Takeuchi F."/>
            <person name="Watanabe S."/>
            <person name="Baba T."/>
            <person name="Yuzawa H."/>
            <person name="Ito T."/>
            <person name="Morimoto Y."/>
            <person name="Kuroda M."/>
            <person name="Cui L."/>
            <person name="Takahashi M."/>
            <person name="Ankai A."/>
            <person name="Baba S."/>
            <person name="Fukui S."/>
            <person name="Lee J.C."/>
            <person name="Hiramatsu K."/>
        </authorList>
    </citation>
    <scope>NUCLEOTIDE SEQUENCE [LARGE SCALE GENOMIC DNA]</scope>
    <source>
        <strain>JCSC1435</strain>
    </source>
</reference>
<organism>
    <name type="scientific">Staphylococcus haemolyticus (strain JCSC1435)</name>
    <dbReference type="NCBI Taxonomy" id="279808"/>
    <lineage>
        <taxon>Bacteria</taxon>
        <taxon>Bacillati</taxon>
        <taxon>Bacillota</taxon>
        <taxon>Bacilli</taxon>
        <taxon>Bacillales</taxon>
        <taxon>Staphylococcaceae</taxon>
        <taxon>Staphylococcus</taxon>
    </lineage>
</organism>
<protein>
    <recommendedName>
        <fullName evidence="1">Glycine cleavage system H protein</fullName>
    </recommendedName>
    <alternativeName>
        <fullName evidence="1">Octanoyl/lipoyl carrier protein</fullName>
    </alternativeName>
</protein>
<accession>Q4L4R5</accession>
<evidence type="ECO:0000255" key="1">
    <source>
        <dbReference type="HAMAP-Rule" id="MF_00272"/>
    </source>
</evidence>
<evidence type="ECO:0000255" key="2">
    <source>
        <dbReference type="PROSITE-ProRule" id="PRU01066"/>
    </source>
</evidence>
<comment type="function">
    <text evidence="1">The glycine cleavage system catalyzes the degradation of glycine. The H protein shuttles the methylamine group of glycine from the P protein to the T protein.</text>
</comment>
<comment type="function">
    <text evidence="1">Is also involved in protein lipoylation via its role as an octanoyl/lipoyl carrier protein intermediate.</text>
</comment>
<comment type="cofactor">
    <cofactor evidence="1">
        <name>(R)-lipoate</name>
        <dbReference type="ChEBI" id="CHEBI:83088"/>
    </cofactor>
    <text evidence="1">Binds 1 lipoyl cofactor covalently.</text>
</comment>
<comment type="subunit">
    <text evidence="1">The glycine cleavage system is composed of four proteins: P, T, L and H.</text>
</comment>
<comment type="similarity">
    <text evidence="1">Belongs to the GcvH family.</text>
</comment>
<feature type="chain" id="PRO_0000302445" description="Glycine cleavage system H protein">
    <location>
        <begin position="1"/>
        <end position="126"/>
    </location>
</feature>
<feature type="domain" description="Lipoyl-binding" evidence="2">
    <location>
        <begin position="22"/>
        <end position="104"/>
    </location>
</feature>
<feature type="modified residue" description="N6-lipoyllysine" evidence="1">
    <location>
        <position position="63"/>
    </location>
</feature>
<keyword id="KW-0450">Lipoyl</keyword>
<dbReference type="EMBL" id="AP006716">
    <property type="protein sequence ID" value="BAE05360.1"/>
    <property type="molecule type" value="Genomic_DNA"/>
</dbReference>
<dbReference type="RefSeq" id="WP_011276315.1">
    <property type="nucleotide sequence ID" value="NC_007168.1"/>
</dbReference>
<dbReference type="SMR" id="Q4L4R5"/>
<dbReference type="GeneID" id="93781405"/>
<dbReference type="KEGG" id="sha:SH2051"/>
<dbReference type="eggNOG" id="COG0509">
    <property type="taxonomic scope" value="Bacteria"/>
</dbReference>
<dbReference type="HOGENOM" id="CLU_097408_2_2_9"/>
<dbReference type="OrthoDB" id="9796712at2"/>
<dbReference type="Proteomes" id="UP000000543">
    <property type="component" value="Chromosome"/>
</dbReference>
<dbReference type="GO" id="GO:0005829">
    <property type="term" value="C:cytosol"/>
    <property type="evidence" value="ECO:0007669"/>
    <property type="project" value="TreeGrafter"/>
</dbReference>
<dbReference type="GO" id="GO:0005960">
    <property type="term" value="C:glycine cleavage complex"/>
    <property type="evidence" value="ECO:0007669"/>
    <property type="project" value="InterPro"/>
</dbReference>
<dbReference type="GO" id="GO:0019464">
    <property type="term" value="P:glycine decarboxylation via glycine cleavage system"/>
    <property type="evidence" value="ECO:0007669"/>
    <property type="project" value="UniProtKB-UniRule"/>
</dbReference>
<dbReference type="CDD" id="cd06848">
    <property type="entry name" value="GCS_H"/>
    <property type="match status" value="1"/>
</dbReference>
<dbReference type="Gene3D" id="2.40.50.100">
    <property type="match status" value="1"/>
</dbReference>
<dbReference type="HAMAP" id="MF_00272">
    <property type="entry name" value="GcvH"/>
    <property type="match status" value="1"/>
</dbReference>
<dbReference type="InterPro" id="IPR003016">
    <property type="entry name" value="2-oxoA_DH_lipoyl-BS"/>
</dbReference>
<dbReference type="InterPro" id="IPR000089">
    <property type="entry name" value="Biotin_lipoyl"/>
</dbReference>
<dbReference type="InterPro" id="IPR002930">
    <property type="entry name" value="GCV_H"/>
</dbReference>
<dbReference type="InterPro" id="IPR033753">
    <property type="entry name" value="GCV_H/Fam206"/>
</dbReference>
<dbReference type="InterPro" id="IPR017453">
    <property type="entry name" value="GCV_H_sub"/>
</dbReference>
<dbReference type="InterPro" id="IPR011053">
    <property type="entry name" value="Single_hybrid_motif"/>
</dbReference>
<dbReference type="NCBIfam" id="TIGR00527">
    <property type="entry name" value="gcvH"/>
    <property type="match status" value="1"/>
</dbReference>
<dbReference type="NCBIfam" id="NF002270">
    <property type="entry name" value="PRK01202.1"/>
    <property type="match status" value="1"/>
</dbReference>
<dbReference type="PANTHER" id="PTHR11715">
    <property type="entry name" value="GLYCINE CLEAVAGE SYSTEM H PROTEIN"/>
    <property type="match status" value="1"/>
</dbReference>
<dbReference type="PANTHER" id="PTHR11715:SF3">
    <property type="entry name" value="GLYCINE CLEAVAGE SYSTEM H PROTEIN-RELATED"/>
    <property type="match status" value="1"/>
</dbReference>
<dbReference type="Pfam" id="PF01597">
    <property type="entry name" value="GCV_H"/>
    <property type="match status" value="1"/>
</dbReference>
<dbReference type="SUPFAM" id="SSF51230">
    <property type="entry name" value="Single hybrid motif"/>
    <property type="match status" value="1"/>
</dbReference>
<dbReference type="PROSITE" id="PS50968">
    <property type="entry name" value="BIOTINYL_LIPOYL"/>
    <property type="match status" value="1"/>
</dbReference>
<dbReference type="PROSITE" id="PS00189">
    <property type="entry name" value="LIPOYL"/>
    <property type="match status" value="1"/>
</dbReference>
<proteinExistence type="inferred from homology"/>
<sequence>MAVPSELKYSKEHEWVKVEGNTVTIGITEYAQGELGDIVFVELPEVDDEINEGDTFGSVESVKTVSELYAPVSGKVVESNEELEDSPEFVNESPYEKAWMVKVELSDESQLDDLLSADQYKEMIGE</sequence>